<proteinExistence type="evidence at protein level"/>
<sequence length="534" mass="58123">MAGLLSSCCGRVYALLPDSAHPSAQQKTPFGVNRYVLLVIYMIYALLTSSVYFGWRSMSAMLFKSGQFSWVCTGESADTSPEEGETDYLCALQDTKVQSLFTIAMACHFTCSAVAGYLLDTVGPKAVALLGQTFNALAWILLAFSGPNFRSVYPAFVFMGAGADVSVYPTLLIVNLFPGSTALIMATLGACISLSFFVPLVLRTMWESTGISFEAVCIGYAVAGPILCAVVAFFFIPFKAFKGVDNFSACVEAEKLANSPTAQSSPKAVDSPPCDEGASSRGRLAVSHNTERTAPDDEQEKDNTERISLSDLACDPRFKKQKVSFSSQAFTFLYFGICLYFTVCGWVMAYYQEAAGRFLCNDAEYTLEILTPLSTIPCLLFGVVINRIGIMPVILMLNTIGLLTYVCVVAAESVVAQYFSVIFFFMYISIFTTQMYVFVESTFDSAHFGKLIGVASLIGGLLSLISNVLYGDVTVGMLNGDTRPVVIALLAVIILMYPILLAMRTKRNRKKQMEQEDIRSRVLELKAAHAADAA</sequence>
<gene>
    <name evidence="9" type="primary">NPT1</name>
    <name evidence="8" type="synonym">ApiAT1</name>
    <name evidence="13" type="ORF">TGME49_215490</name>
</gene>
<comment type="function">
    <text evidence="4 5 7">Selective L-arginine transporter that is essential for parasite survival and virulence (PubMed:28205520, PubMed:30742695, PubMed:34432856). Does not require other inorganic ions such as sodium, chloride, potassium or calcium (PubMed:28205520).</text>
</comment>
<comment type="catalytic activity">
    <reaction evidence="4 7">
        <text>L-arginine(in) = L-arginine(out)</text>
        <dbReference type="Rhea" id="RHEA:32143"/>
        <dbReference type="ChEBI" id="CHEBI:32682"/>
    </reaction>
    <physiologicalReaction direction="right-to-left" evidence="4">
        <dbReference type="Rhea" id="RHEA:32145"/>
    </physiologicalReaction>
</comment>
<comment type="biophysicochemical properties">
    <kinetics>
        <KM evidence="4">88 uM for arginine</KM>
    </kinetics>
    <phDependence>
        <text evidence="4">Optimum pH is 5-8.</text>
    </phDependence>
</comment>
<comment type="subcellular location">
    <subcellularLocation>
        <location evidence="4">Cell membrane</location>
        <topology evidence="1">Multi-pass membrane protein</topology>
    </subcellularLocation>
</comment>
<comment type="induction">
    <text evidence="6">Up-regulated in response to low concentrations of arginine in the environment (PubMed:34352043). Up-regulated in response to high concentrations of lysine in the environment (PubMed:34352043).</text>
</comment>
<comment type="disruption phenotype">
    <text evidence="4">Impaired parasite growth under conditions of restricted arginine availability (PubMed:28205520). Does not cause toxoplasmosis in mice (PubMed:28205520).</text>
</comment>
<comment type="similarity">
    <text evidence="11">Belongs to the SLC43A transporter (TC 2.A.1.44) family.</text>
</comment>
<reference evidence="14" key="1">
    <citation type="submission" date="2013-04" db="EMBL/GenBank/DDBJ databases">
        <authorList>
            <person name="Sibley D."/>
            <person name="Venepally P."/>
            <person name="Karamycheva S."/>
            <person name="Hadjithomas M."/>
            <person name="Khan A."/>
            <person name="Brunk B."/>
            <person name="Roos D."/>
            <person name="Caler E."/>
            <person name="Lorenzi H."/>
        </authorList>
    </citation>
    <scope>NUCLEOTIDE SEQUENCE [LARGE SCALE GENOMIC DNA]</scope>
    <source>
        <strain evidence="14">ATCC 50611 / Me49</strain>
    </source>
</reference>
<reference evidence="11" key="2">
    <citation type="journal article" date="2017" name="Nat. Commun.">
        <title>Cationic amino acid transporters play key roles in the survival and transmission of apicomplexan parasites.</title>
        <authorList>
            <person name="Rajendran E."/>
            <person name="Hapuarachchi S.V."/>
            <person name="Miller C.M."/>
            <person name="Fairweather S.J."/>
            <person name="Cai Y."/>
            <person name="Smith N.C."/>
            <person name="Cockburn I.A."/>
            <person name="Broeer S."/>
            <person name="Kirk K."/>
            <person name="van Dooren G.G."/>
        </authorList>
    </citation>
    <scope>FUNCTION</scope>
    <scope>CATALYTIC ACTIVITY</scope>
    <scope>BIOPHYSICOCHEMICAL PROPERTIES</scope>
    <scope>SUBCELLULAR LOCATION</scope>
    <scope>DISRUPTION PHENOTYPE</scope>
    <source>
        <strain evidence="4">RH</strain>
    </source>
</reference>
<reference evidence="11" key="3">
    <citation type="journal article" date="2019" name="PLoS Pathog.">
        <title>The tyrosine transporter of Toxoplasma gondii is a member of the newly defined apicomplexan amino acid transporter (ApiAT) family.</title>
        <authorList>
            <person name="Parker K.E.R."/>
            <person name="Fairweather S.J."/>
            <person name="Rajendran E."/>
            <person name="Blume M."/>
            <person name="McConville M.J."/>
            <person name="Broeer S."/>
            <person name="Kirk K."/>
            <person name="van Dooren G.G."/>
        </authorList>
    </citation>
    <scope>FUNCTION</scope>
    <scope>NOMENCLATURE</scope>
    <scope>MUTAGENESIS OF 54-GLY--ALA-534</scope>
</reference>
<reference key="4">
    <citation type="journal article" date="2021" name="PLoS Pathog.">
        <title>Substrate-mediated regulation of the arginine transporter of Toxoplasma gondii.</title>
        <authorList>
            <person name="Rajendran E."/>
            <person name="Clark M."/>
            <person name="Goulart C."/>
            <person name="Steinhoefel B."/>
            <person name="Tjhin E.T."/>
            <person name="Gross S."/>
            <person name="Smith N.C."/>
            <person name="Kirk K."/>
            <person name="van Dooren G.G."/>
        </authorList>
    </citation>
    <scope>INDUCTION BY LOW LEVELS OF ARGININE AND HIGH LEVELS OF LYSINE</scope>
</reference>
<reference key="5">
    <citation type="journal article" date="2021" name="PLoS Pathog.">
        <title>Coordinated action of multiple transporters in the acquisition of essential cationic amino acids by the intracellular parasite Toxoplasma gondii.</title>
        <authorList>
            <person name="Fairweather S.J."/>
            <person name="Rajendran E."/>
            <person name="Blume M."/>
            <person name="Javed K."/>
            <person name="Steinhoefel B."/>
            <person name="McConville M.J."/>
            <person name="Kirk K."/>
            <person name="Broeer S."/>
            <person name="van Dooren G.G."/>
        </authorList>
    </citation>
    <scope>FUNCTION</scope>
    <scope>TRANSPORTER ACTIVITY</scope>
</reference>
<feature type="chain" id="PRO_0000454212" description="Arginine transporter 1">
    <location>
        <begin position="1"/>
        <end position="534"/>
    </location>
</feature>
<feature type="transmembrane region" description="Helical" evidence="1">
    <location>
        <begin position="35"/>
        <end position="55"/>
    </location>
</feature>
<feature type="transmembrane region" description="Helical" evidence="1">
    <location>
        <begin position="99"/>
        <end position="119"/>
    </location>
</feature>
<feature type="transmembrane region" description="Helical" evidence="1">
    <location>
        <begin position="126"/>
        <end position="146"/>
    </location>
</feature>
<feature type="transmembrane region" description="Helical" evidence="1">
    <location>
        <begin position="154"/>
        <end position="174"/>
    </location>
</feature>
<feature type="transmembrane region" description="Helical" evidence="1">
    <location>
        <begin position="182"/>
        <end position="202"/>
    </location>
</feature>
<feature type="transmembrane region" description="Helical" evidence="1">
    <location>
        <begin position="216"/>
        <end position="236"/>
    </location>
</feature>
<feature type="transmembrane region" description="Helical" evidence="1">
    <location>
        <begin position="329"/>
        <end position="349"/>
    </location>
</feature>
<feature type="transmembrane region" description="Helical" evidence="1">
    <location>
        <begin position="365"/>
        <end position="385"/>
    </location>
</feature>
<feature type="transmembrane region" description="Helical" evidence="1">
    <location>
        <begin position="388"/>
        <end position="408"/>
    </location>
</feature>
<feature type="transmembrane region" description="Helical" evidence="1">
    <location>
        <begin position="419"/>
        <end position="439"/>
    </location>
</feature>
<feature type="transmembrane region" description="Helical" evidence="1">
    <location>
        <begin position="451"/>
        <end position="471"/>
    </location>
</feature>
<feature type="transmembrane region" description="Helical" evidence="1">
    <location>
        <begin position="483"/>
        <end position="503"/>
    </location>
</feature>
<feature type="region of interest" description="Disordered" evidence="3">
    <location>
        <begin position="261"/>
        <end position="302"/>
    </location>
</feature>
<feature type="compositionally biased region" description="Basic and acidic residues" evidence="3">
    <location>
        <begin position="289"/>
        <end position="302"/>
    </location>
</feature>
<feature type="glycosylation site" description="N-linked (GlcNAc...) asparagine" evidence="2">
    <location>
        <position position="246"/>
    </location>
</feature>
<feature type="mutagenesis site" description="Impaired parasite growth under conditions of restricted arginine availability." evidence="5">
    <location>
        <begin position="54"/>
        <end position="534"/>
    </location>
</feature>
<dbReference type="EMBL" id="KE138836">
    <property type="protein sequence ID" value="EPT26443.1"/>
    <property type="molecule type" value="Genomic_DNA"/>
</dbReference>
<dbReference type="RefSeq" id="XP_002370868.1">
    <property type="nucleotide sequence ID" value="XM_002370827.2"/>
</dbReference>
<dbReference type="GlyCosmos" id="S8EZA7">
    <property type="glycosylation" value="1 site, No reported glycans"/>
</dbReference>
<dbReference type="EnsemblProtists" id="TGME49_215490-t26_1">
    <property type="protein sequence ID" value="TGME49_215490-t26_1"/>
    <property type="gene ID" value="TGME49_215490"/>
</dbReference>
<dbReference type="GeneID" id="7897047"/>
<dbReference type="KEGG" id="tgo:TGME49_215490"/>
<dbReference type="VEuPathDB" id="ToxoDB:TGME49_215490"/>
<dbReference type="HOGENOM" id="CLU_021456_0_0_1"/>
<dbReference type="OrthoDB" id="330047at2759"/>
<dbReference type="PhylomeDB" id="S8EZA7"/>
<dbReference type="Proteomes" id="UP000001529">
    <property type="component" value="Chromosome X"/>
</dbReference>
<dbReference type="GO" id="GO:0005886">
    <property type="term" value="C:plasma membrane"/>
    <property type="evidence" value="ECO:0000314"/>
    <property type="project" value="UniProtKB"/>
</dbReference>
<dbReference type="GO" id="GO:0061459">
    <property type="term" value="F:L-arginine transmembrane transporter activity"/>
    <property type="evidence" value="ECO:0000315"/>
    <property type="project" value="UniProtKB"/>
</dbReference>
<dbReference type="GO" id="GO:0097638">
    <property type="term" value="P:L-arginine import across plasma membrane"/>
    <property type="evidence" value="ECO:0000315"/>
    <property type="project" value="UniProtKB"/>
</dbReference>
<dbReference type="Gene3D" id="1.20.1250.20">
    <property type="entry name" value="MFS general substrate transporter like domains"/>
    <property type="match status" value="1"/>
</dbReference>
<dbReference type="InterPro" id="IPR011701">
    <property type="entry name" value="MFS"/>
</dbReference>
<dbReference type="InterPro" id="IPR036259">
    <property type="entry name" value="MFS_trans_sf"/>
</dbReference>
<dbReference type="InterPro" id="IPR052599">
    <property type="entry name" value="SLC43A_AATransporter"/>
</dbReference>
<dbReference type="PANTHER" id="PTHR20772">
    <property type="entry name" value="PROTEIN FMP42"/>
    <property type="match status" value="1"/>
</dbReference>
<dbReference type="PANTHER" id="PTHR20772:SF2">
    <property type="entry name" value="PROTEIN FMP42"/>
    <property type="match status" value="1"/>
</dbReference>
<dbReference type="Pfam" id="PF07690">
    <property type="entry name" value="MFS_1"/>
    <property type="match status" value="1"/>
</dbReference>
<dbReference type="SUPFAM" id="SSF103473">
    <property type="entry name" value="MFS general substrate transporter"/>
    <property type="match status" value="1"/>
</dbReference>
<accession>S8EZA7</accession>
<keyword id="KW-0029">Amino-acid transport</keyword>
<keyword id="KW-1003">Cell membrane</keyword>
<keyword id="KW-0325">Glycoprotein</keyword>
<keyword id="KW-0472">Membrane</keyword>
<keyword id="KW-1185">Reference proteome</keyword>
<keyword id="KW-0812">Transmembrane</keyword>
<keyword id="KW-1133">Transmembrane helix</keyword>
<keyword id="KW-0813">Transport</keyword>
<organism evidence="14">
    <name type="scientific">Toxoplasma gondii (strain ATCC 50611 / Me49)</name>
    <dbReference type="NCBI Taxonomy" id="508771"/>
    <lineage>
        <taxon>Eukaryota</taxon>
        <taxon>Sar</taxon>
        <taxon>Alveolata</taxon>
        <taxon>Apicomplexa</taxon>
        <taxon>Conoidasida</taxon>
        <taxon>Coccidia</taxon>
        <taxon>Eucoccidiorida</taxon>
        <taxon>Eimeriorina</taxon>
        <taxon>Sarcocystidae</taxon>
        <taxon>Toxoplasma</taxon>
    </lineage>
</organism>
<name>AT1_TOXGM</name>
<protein>
    <recommendedName>
        <fullName evidence="11">Arginine transporter 1</fullName>
    </recommendedName>
    <alternativeName>
        <fullName evidence="9">Amino acid transporter 1</fullName>
    </alternativeName>
    <alternativeName>
        <fullName evidence="9">Apicomplexan amino acid transporter 1</fullName>
        <shortName evidence="9 10">TgApiAT1</shortName>
    </alternativeName>
    <alternativeName>
        <fullName evidence="12">Major facilitator superfamily domain-containing protein</fullName>
    </alternativeName>
    <alternativeName>
        <fullName evidence="8">Novel putative transporter 1</fullName>
        <shortName evidence="8">TgNPT1</shortName>
    </alternativeName>
</protein>
<evidence type="ECO:0000255" key="1"/>
<evidence type="ECO:0000255" key="2">
    <source>
        <dbReference type="PROSITE-ProRule" id="PRU00498"/>
    </source>
</evidence>
<evidence type="ECO:0000256" key="3">
    <source>
        <dbReference type="SAM" id="MobiDB-lite"/>
    </source>
</evidence>
<evidence type="ECO:0000269" key="4">
    <source>
    </source>
</evidence>
<evidence type="ECO:0000269" key="5">
    <source>
    </source>
</evidence>
<evidence type="ECO:0000269" key="6">
    <source>
    </source>
</evidence>
<evidence type="ECO:0000269" key="7">
    <source>
    </source>
</evidence>
<evidence type="ECO:0000303" key="8">
    <source>
    </source>
</evidence>
<evidence type="ECO:0000303" key="9">
    <source>
    </source>
</evidence>
<evidence type="ECO:0000303" key="10">
    <source>
    </source>
</evidence>
<evidence type="ECO:0000305" key="11"/>
<evidence type="ECO:0000305" key="12">
    <source>
    </source>
</evidence>
<evidence type="ECO:0000312" key="13">
    <source>
        <dbReference type="EMBL" id="EPT26443.1"/>
    </source>
</evidence>
<evidence type="ECO:0000312" key="14">
    <source>
        <dbReference type="Proteomes" id="UP000001529"/>
    </source>
</evidence>